<reference key="1">
    <citation type="journal article" date="2004" name="Science">
        <title>The 1.2-megabase genome sequence of Mimivirus.</title>
        <authorList>
            <person name="Raoult D."/>
            <person name="Audic S."/>
            <person name="Robert C."/>
            <person name="Abergel C."/>
            <person name="Renesto P."/>
            <person name="Ogata H."/>
            <person name="La Scola B."/>
            <person name="Susan M."/>
            <person name="Claverie J.-M."/>
        </authorList>
    </citation>
    <scope>NUCLEOTIDE SEQUENCE [LARGE SCALE GENOMIC DNA]</scope>
    <source>
        <strain>Rowbotham-Bradford</strain>
    </source>
</reference>
<name>YL111_MIMIV</name>
<dbReference type="EMBL" id="AY653733">
    <property type="protein sequence ID" value="AAV50386.1"/>
    <property type="molecule type" value="Genomic_DNA"/>
</dbReference>
<dbReference type="KEGG" id="vg:9924709"/>
<dbReference type="OrthoDB" id="20334at10239"/>
<dbReference type="Proteomes" id="UP000001134">
    <property type="component" value="Genome"/>
</dbReference>
<proteinExistence type="inferred from homology"/>
<gene>
    <name type="ordered locus">MIMI_L111</name>
</gene>
<organismHost>
    <name type="scientific">Acanthamoeba polyphaga</name>
    <name type="common">Amoeba</name>
    <dbReference type="NCBI Taxonomy" id="5757"/>
</organismHost>
<keyword id="KW-1185">Reference proteome</keyword>
<protein>
    <recommendedName>
        <fullName>Uncharacterized protein L111</fullName>
    </recommendedName>
</protein>
<evidence type="ECO:0000305" key="1"/>
<feature type="chain" id="PRO_0000071211" description="Uncharacterized protein L111">
    <location>
        <begin position="1"/>
        <end position="374"/>
    </location>
</feature>
<sequence>MSSDTLSNIFPGETTDIFESTLSDGQKFSEKKSFTKRSFCEFKDCQVEDNCEIDCSPDKKHRSSTDDSCTVRTKPDGTKIWYKNDKIHRDDDKPAIITSDGKTIWYVNGVIHRDNDLPAMVYSNGKKVWYQHNLVHRDHDKPALIDADGTKMWFRYGKYHRDNDLPAIEAGNGDLVWYKNGLLHRDGDKPSVKRANGKTIWCKNGLKHRDNDKPAYIDNNVIRWLQFGKMHRDNDKPAYVSNTGTLKWYVDDKLHRDNDLPAIINLGRSYFWYKDGLLHRDNDLPTVIDFHGEYQWHSYGKLHRDNDNPAIIRSSGICVWYLHGSFYRPDKKPPKIVDLEYYEICSVIIDRKHSHLYNYAKNLLNEHHKIYLTK</sequence>
<accession>Q5UPI7</accession>
<comment type="similarity">
    <text evidence="1">Belongs to the mimivirus L41 family.</text>
</comment>
<organism>
    <name type="scientific">Acanthamoeba polyphaga mimivirus</name>
    <name type="common">APMV</name>
    <dbReference type="NCBI Taxonomy" id="212035"/>
    <lineage>
        <taxon>Viruses</taxon>
        <taxon>Varidnaviria</taxon>
        <taxon>Bamfordvirae</taxon>
        <taxon>Nucleocytoviricota</taxon>
        <taxon>Megaviricetes</taxon>
        <taxon>Imitervirales</taxon>
        <taxon>Mimiviridae</taxon>
        <taxon>Megamimivirinae</taxon>
        <taxon>Mimivirus</taxon>
        <taxon>Mimivirus bradfordmassiliense</taxon>
    </lineage>
</organism>